<name>MR1L2_HUMAN</name>
<accession>B2RBV5</accession>
<gene>
    <name evidence="6" type="primary">MRFAP1L2</name>
</gene>
<dbReference type="EMBL" id="AK314832">
    <property type="protein sequence ID" value="BAG37352.1"/>
    <property type="molecule type" value="mRNA"/>
</dbReference>
<dbReference type="EMBL" id="AC093323">
    <property type="status" value="NOT_ANNOTATED_CDS"/>
    <property type="molecule type" value="Genomic_DNA"/>
</dbReference>
<dbReference type="EMBL" id="CH471131">
    <property type="protein sequence ID" value="EAW82385.1"/>
    <property type="molecule type" value="Genomic_DNA"/>
</dbReference>
<dbReference type="RefSeq" id="NP_619644.1">
    <property type="nucleotide sequence ID" value="NM_138699.3"/>
</dbReference>
<dbReference type="RefSeq" id="XP_047272375.1">
    <property type="nucleotide sequence ID" value="XM_047416419.1"/>
</dbReference>
<dbReference type="RefSeq" id="XP_047272376.1">
    <property type="nucleotide sequence ID" value="XM_047416420.1"/>
</dbReference>
<dbReference type="RefSeq" id="XP_054207243.1">
    <property type="nucleotide sequence ID" value="XM_054351268.1"/>
</dbReference>
<dbReference type="RefSeq" id="XP_054207244.1">
    <property type="nucleotide sequence ID" value="XM_054351269.1"/>
</dbReference>
<dbReference type="SMR" id="B2RBV5"/>
<dbReference type="iPTMnet" id="B2RBV5"/>
<dbReference type="PhosphoSitePlus" id="B2RBV5"/>
<dbReference type="BioMuta" id="-"/>
<dbReference type="jPOST" id="B2RBV5"/>
<dbReference type="MassIVE" id="B2RBV5"/>
<dbReference type="PeptideAtlas" id="B2RBV5"/>
<dbReference type="Pumba" id="B2RBV5"/>
<dbReference type="Ensembl" id="ENST00000307533.10">
    <property type="protein sequence ID" value="ENSP00000495193.1"/>
    <property type="gene ID" value="ENSG00000170846.17"/>
</dbReference>
<dbReference type="Ensembl" id="ENST00000444232.3">
    <property type="protein sequence ID" value="ENSP00000493702.1"/>
    <property type="gene ID" value="ENSG00000170846.17"/>
</dbReference>
<dbReference type="Ensembl" id="ENST00000635031.2">
    <property type="protein sequence ID" value="ENSP00000493540.1"/>
    <property type="gene ID" value="ENSG00000170846.17"/>
</dbReference>
<dbReference type="GeneID" id="93622"/>
<dbReference type="MANE-Select" id="ENST00000635031.2">
    <property type="protein sequence ID" value="ENSP00000493540.1"/>
    <property type="RefSeq nucleotide sequence ID" value="NM_138699.3"/>
    <property type="RefSeq protein sequence ID" value="NP_619644.1"/>
</dbReference>
<dbReference type="AGR" id="HGNC:25109"/>
<dbReference type="GeneCards" id="MRFAP1L2"/>
<dbReference type="HGNC" id="HGNC:25109">
    <property type="gene designation" value="MRFAP1L2"/>
</dbReference>
<dbReference type="HPA" id="ENSG00000170846">
    <property type="expression patterns" value="Low tissue specificity"/>
</dbReference>
<dbReference type="neXtProt" id="NX_B2RBV5"/>
<dbReference type="OpenTargets" id="ENSG00000170846"/>
<dbReference type="VEuPathDB" id="HostDB:ENSG00000170846"/>
<dbReference type="GeneTree" id="ENSGT00940000155541"/>
<dbReference type="InParanoid" id="B2RBV5"/>
<dbReference type="OMA" id="RITGCEC"/>
<dbReference type="OrthoDB" id="9538419at2759"/>
<dbReference type="PAN-GO" id="B2RBV5">
    <property type="GO annotations" value="0 GO annotations based on evolutionary models"/>
</dbReference>
<dbReference type="Pharos" id="B2RBV5">
    <property type="development level" value="Tdark"/>
</dbReference>
<dbReference type="PRO" id="PR:B2RBV5"/>
<dbReference type="Proteomes" id="UP000005640">
    <property type="component" value="Chromosome 4"/>
</dbReference>
<dbReference type="RNAct" id="B2RBV5">
    <property type="molecule type" value="protein"/>
</dbReference>
<dbReference type="GO" id="GO:0051726">
    <property type="term" value="P:regulation of cell cycle"/>
    <property type="evidence" value="ECO:0000314"/>
    <property type="project" value="UniProtKB"/>
</dbReference>
<dbReference type="InterPro" id="IPR029254">
    <property type="entry name" value="MRFAP1"/>
</dbReference>
<dbReference type="PANTHER" id="PTHR31324:SF3">
    <property type="entry name" value="MORF4 FAMILY ASSOCIATED PROTEIN 1 LIKE 2"/>
    <property type="match status" value="1"/>
</dbReference>
<dbReference type="PANTHER" id="PTHR31324">
    <property type="entry name" value="MORF4 FAMILY-ASSOCIATED PROTEIN 1-RELATED"/>
    <property type="match status" value="1"/>
</dbReference>
<dbReference type="Pfam" id="PF15155">
    <property type="entry name" value="MRFAP1"/>
    <property type="match status" value="1"/>
</dbReference>
<proteinExistence type="evidence at protein level"/>
<comment type="function">
    <text evidence="4">May play a role in cell proliferation.</text>
</comment>
<comment type="subunit">
    <text evidence="4">May interact with CDK2AP1.</text>
</comment>
<comment type="similarity">
    <text evidence="3">Belongs to the MORF4 family-associated protein family.</text>
</comment>
<organism evidence="5">
    <name type="scientific">Homo sapiens</name>
    <name type="common">Human</name>
    <dbReference type="NCBI Taxonomy" id="9606"/>
    <lineage>
        <taxon>Eukaryota</taxon>
        <taxon>Metazoa</taxon>
        <taxon>Chordata</taxon>
        <taxon>Craniata</taxon>
        <taxon>Vertebrata</taxon>
        <taxon>Euteleostomi</taxon>
        <taxon>Mammalia</taxon>
        <taxon>Eutheria</taxon>
        <taxon>Euarchontoglires</taxon>
        <taxon>Primates</taxon>
        <taxon>Haplorrhini</taxon>
        <taxon>Catarrhini</taxon>
        <taxon>Hominidae</taxon>
        <taxon>Homo</taxon>
    </lineage>
</organism>
<protein>
    <recommendedName>
        <fullName evidence="3">MORF4 family associated protein 1 like 2</fullName>
    </recommendedName>
    <alternativeName>
        <fullName evidence="3">MORF4 family-associated protein 1-like protein UPP</fullName>
    </alternativeName>
    <alternativeName>
        <fullName evidence="2">Unnamed protein product</fullName>
        <shortName evidence="2">UPP</shortName>
    </alternativeName>
</protein>
<keyword id="KW-1267">Proteomics identification</keyword>
<keyword id="KW-1185">Reference proteome</keyword>
<feature type="chain" id="PRO_0000434545" description="MORF4 family associated protein 1 like 2">
    <location>
        <begin position="1"/>
        <end position="119"/>
    </location>
</feature>
<feature type="region of interest" description="Disordered" evidence="1">
    <location>
        <begin position="1"/>
        <end position="36"/>
    </location>
</feature>
<feature type="compositionally biased region" description="Basic and acidic residues" evidence="1">
    <location>
        <begin position="1"/>
        <end position="16"/>
    </location>
</feature>
<evidence type="ECO:0000256" key="1">
    <source>
        <dbReference type="SAM" id="MobiDB-lite"/>
    </source>
</evidence>
<evidence type="ECO:0000303" key="2">
    <source>
    </source>
</evidence>
<evidence type="ECO:0000305" key="3"/>
<evidence type="ECO:0000305" key="4">
    <source>
    </source>
</evidence>
<evidence type="ECO:0000312" key="5">
    <source>
        <dbReference type="EMBL" id="BAG37352.1"/>
    </source>
</evidence>
<evidence type="ECO:0000312" key="6">
    <source>
        <dbReference type="HGNC" id="HGNC:25109"/>
    </source>
</evidence>
<reference key="1">
    <citation type="journal article" date="2004" name="Nat. Genet.">
        <title>Complete sequencing and characterization of 21,243 full-length human cDNAs.</title>
        <authorList>
            <person name="Ota T."/>
            <person name="Suzuki Y."/>
            <person name="Nishikawa T."/>
            <person name="Otsuki T."/>
            <person name="Sugiyama T."/>
            <person name="Irie R."/>
            <person name="Wakamatsu A."/>
            <person name="Hayashi K."/>
            <person name="Sato H."/>
            <person name="Nagai K."/>
            <person name="Kimura K."/>
            <person name="Makita H."/>
            <person name="Sekine M."/>
            <person name="Obayashi M."/>
            <person name="Nishi T."/>
            <person name="Shibahara T."/>
            <person name="Tanaka T."/>
            <person name="Ishii S."/>
            <person name="Yamamoto J."/>
            <person name="Saito K."/>
            <person name="Kawai Y."/>
            <person name="Isono Y."/>
            <person name="Nakamura Y."/>
            <person name="Nagahari K."/>
            <person name="Murakami K."/>
            <person name="Yasuda T."/>
            <person name="Iwayanagi T."/>
            <person name="Wagatsuma M."/>
            <person name="Shiratori A."/>
            <person name="Sudo H."/>
            <person name="Hosoiri T."/>
            <person name="Kaku Y."/>
            <person name="Kodaira H."/>
            <person name="Kondo H."/>
            <person name="Sugawara M."/>
            <person name="Takahashi M."/>
            <person name="Kanda K."/>
            <person name="Yokoi T."/>
            <person name="Furuya T."/>
            <person name="Kikkawa E."/>
            <person name="Omura Y."/>
            <person name="Abe K."/>
            <person name="Kamihara K."/>
            <person name="Katsuta N."/>
            <person name="Sato K."/>
            <person name="Tanikawa M."/>
            <person name="Yamazaki M."/>
            <person name="Ninomiya K."/>
            <person name="Ishibashi T."/>
            <person name="Yamashita H."/>
            <person name="Murakawa K."/>
            <person name="Fujimori K."/>
            <person name="Tanai H."/>
            <person name="Kimata M."/>
            <person name="Watanabe M."/>
            <person name="Hiraoka S."/>
            <person name="Chiba Y."/>
            <person name="Ishida S."/>
            <person name="Ono Y."/>
            <person name="Takiguchi S."/>
            <person name="Watanabe S."/>
            <person name="Yosida M."/>
            <person name="Hotuta T."/>
            <person name="Kusano J."/>
            <person name="Kanehori K."/>
            <person name="Takahashi-Fujii A."/>
            <person name="Hara H."/>
            <person name="Tanase T.-O."/>
            <person name="Nomura Y."/>
            <person name="Togiya S."/>
            <person name="Komai F."/>
            <person name="Hara R."/>
            <person name="Takeuchi K."/>
            <person name="Arita M."/>
            <person name="Imose N."/>
            <person name="Musashino K."/>
            <person name="Yuuki H."/>
            <person name="Oshima A."/>
            <person name="Sasaki N."/>
            <person name="Aotsuka S."/>
            <person name="Yoshikawa Y."/>
            <person name="Matsunawa H."/>
            <person name="Ichihara T."/>
            <person name="Shiohata N."/>
            <person name="Sano S."/>
            <person name="Moriya S."/>
            <person name="Momiyama H."/>
            <person name="Satoh N."/>
            <person name="Takami S."/>
            <person name="Terashima Y."/>
            <person name="Suzuki O."/>
            <person name="Nakagawa S."/>
            <person name="Senoh A."/>
            <person name="Mizoguchi H."/>
            <person name="Goto Y."/>
            <person name="Shimizu F."/>
            <person name="Wakebe H."/>
            <person name="Hishigaki H."/>
            <person name="Watanabe T."/>
            <person name="Sugiyama A."/>
            <person name="Takemoto M."/>
            <person name="Kawakami B."/>
            <person name="Yamazaki M."/>
            <person name="Watanabe K."/>
            <person name="Kumagai A."/>
            <person name="Itakura S."/>
            <person name="Fukuzumi Y."/>
            <person name="Fujimori Y."/>
            <person name="Komiyama M."/>
            <person name="Tashiro H."/>
            <person name="Tanigami A."/>
            <person name="Fujiwara T."/>
            <person name="Ono T."/>
            <person name="Yamada K."/>
            <person name="Fujii Y."/>
            <person name="Ozaki K."/>
            <person name="Hirao M."/>
            <person name="Ohmori Y."/>
            <person name="Kawabata A."/>
            <person name="Hikiji T."/>
            <person name="Kobatake N."/>
            <person name="Inagaki H."/>
            <person name="Ikema Y."/>
            <person name="Okamoto S."/>
            <person name="Okitani R."/>
            <person name="Kawakami T."/>
            <person name="Noguchi S."/>
            <person name="Itoh T."/>
            <person name="Shigeta K."/>
            <person name="Senba T."/>
            <person name="Matsumura K."/>
            <person name="Nakajima Y."/>
            <person name="Mizuno T."/>
            <person name="Morinaga M."/>
            <person name="Sasaki M."/>
            <person name="Togashi T."/>
            <person name="Oyama M."/>
            <person name="Hata H."/>
            <person name="Watanabe M."/>
            <person name="Komatsu T."/>
            <person name="Mizushima-Sugano J."/>
            <person name="Satoh T."/>
            <person name="Shirai Y."/>
            <person name="Takahashi Y."/>
            <person name="Nakagawa K."/>
            <person name="Okumura K."/>
            <person name="Nagase T."/>
            <person name="Nomura N."/>
            <person name="Kikuchi H."/>
            <person name="Masuho Y."/>
            <person name="Yamashita R."/>
            <person name="Nakai K."/>
            <person name="Yada T."/>
            <person name="Nakamura Y."/>
            <person name="Ohara O."/>
            <person name="Isogai T."/>
            <person name="Sugano S."/>
        </authorList>
    </citation>
    <scope>NUCLEOTIDE SEQUENCE [LARGE SCALE MRNA]</scope>
    <source>
        <tissue>Thymus</tissue>
    </source>
</reference>
<reference key="2">
    <citation type="journal article" date="2005" name="Nature">
        <title>Generation and annotation of the DNA sequences of human chromosomes 2 and 4.</title>
        <authorList>
            <person name="Hillier L.W."/>
            <person name="Graves T.A."/>
            <person name="Fulton R.S."/>
            <person name="Fulton L.A."/>
            <person name="Pepin K.H."/>
            <person name="Minx P."/>
            <person name="Wagner-McPherson C."/>
            <person name="Layman D."/>
            <person name="Wylie K."/>
            <person name="Sekhon M."/>
            <person name="Becker M.C."/>
            <person name="Fewell G.A."/>
            <person name="Delehaunty K.D."/>
            <person name="Miner T.L."/>
            <person name="Nash W.E."/>
            <person name="Kremitzki C."/>
            <person name="Oddy L."/>
            <person name="Du H."/>
            <person name="Sun H."/>
            <person name="Bradshaw-Cordum H."/>
            <person name="Ali J."/>
            <person name="Carter J."/>
            <person name="Cordes M."/>
            <person name="Harris A."/>
            <person name="Isak A."/>
            <person name="van Brunt A."/>
            <person name="Nguyen C."/>
            <person name="Du F."/>
            <person name="Courtney L."/>
            <person name="Kalicki J."/>
            <person name="Ozersky P."/>
            <person name="Abbott S."/>
            <person name="Armstrong J."/>
            <person name="Belter E.A."/>
            <person name="Caruso L."/>
            <person name="Cedroni M."/>
            <person name="Cotton M."/>
            <person name="Davidson T."/>
            <person name="Desai A."/>
            <person name="Elliott G."/>
            <person name="Erb T."/>
            <person name="Fronick C."/>
            <person name="Gaige T."/>
            <person name="Haakenson W."/>
            <person name="Haglund K."/>
            <person name="Holmes A."/>
            <person name="Harkins R."/>
            <person name="Kim K."/>
            <person name="Kruchowski S.S."/>
            <person name="Strong C.M."/>
            <person name="Grewal N."/>
            <person name="Goyea E."/>
            <person name="Hou S."/>
            <person name="Levy A."/>
            <person name="Martinka S."/>
            <person name="Mead K."/>
            <person name="McLellan M.D."/>
            <person name="Meyer R."/>
            <person name="Randall-Maher J."/>
            <person name="Tomlinson C."/>
            <person name="Dauphin-Kohlberg S."/>
            <person name="Kozlowicz-Reilly A."/>
            <person name="Shah N."/>
            <person name="Swearengen-Shahid S."/>
            <person name="Snider J."/>
            <person name="Strong J.T."/>
            <person name="Thompson J."/>
            <person name="Yoakum M."/>
            <person name="Leonard S."/>
            <person name="Pearman C."/>
            <person name="Trani L."/>
            <person name="Radionenko M."/>
            <person name="Waligorski J.E."/>
            <person name="Wang C."/>
            <person name="Rock S.M."/>
            <person name="Tin-Wollam A.-M."/>
            <person name="Maupin R."/>
            <person name="Latreille P."/>
            <person name="Wendl M.C."/>
            <person name="Yang S.-P."/>
            <person name="Pohl C."/>
            <person name="Wallis J.W."/>
            <person name="Spieth J."/>
            <person name="Bieri T.A."/>
            <person name="Berkowicz N."/>
            <person name="Nelson J.O."/>
            <person name="Osborne J."/>
            <person name="Ding L."/>
            <person name="Meyer R."/>
            <person name="Sabo A."/>
            <person name="Shotland Y."/>
            <person name="Sinha P."/>
            <person name="Wohldmann P.E."/>
            <person name="Cook L.L."/>
            <person name="Hickenbotham M.T."/>
            <person name="Eldred J."/>
            <person name="Williams D."/>
            <person name="Jones T.A."/>
            <person name="She X."/>
            <person name="Ciccarelli F.D."/>
            <person name="Izaurralde E."/>
            <person name="Taylor J."/>
            <person name="Schmutz J."/>
            <person name="Myers R.M."/>
            <person name="Cox D.R."/>
            <person name="Huang X."/>
            <person name="McPherson J.D."/>
            <person name="Mardis E.R."/>
            <person name="Clifton S.W."/>
            <person name="Warren W.C."/>
            <person name="Chinwalla A.T."/>
            <person name="Eddy S.R."/>
            <person name="Marra M.A."/>
            <person name="Ovcharenko I."/>
            <person name="Furey T.S."/>
            <person name="Miller W."/>
            <person name="Eichler E.E."/>
            <person name="Bork P."/>
            <person name="Suyama M."/>
            <person name="Torrents D."/>
            <person name="Waterston R.H."/>
            <person name="Wilson R.K."/>
        </authorList>
    </citation>
    <scope>NUCLEOTIDE SEQUENCE [LARGE SCALE GENOMIC DNA]</scope>
</reference>
<reference key="3">
    <citation type="submission" date="2005-09" db="EMBL/GenBank/DDBJ databases">
        <authorList>
            <person name="Mural R.J."/>
            <person name="Istrail S."/>
            <person name="Sutton G.G."/>
            <person name="Florea L."/>
            <person name="Halpern A.L."/>
            <person name="Mobarry C.M."/>
            <person name="Lippert R."/>
            <person name="Walenz B."/>
            <person name="Shatkay H."/>
            <person name="Dew I."/>
            <person name="Miller J.R."/>
            <person name="Flanigan M.J."/>
            <person name="Edwards N.J."/>
            <person name="Bolanos R."/>
            <person name="Fasulo D."/>
            <person name="Halldorsson B.V."/>
            <person name="Hannenhalli S."/>
            <person name="Turner R."/>
            <person name="Yooseph S."/>
            <person name="Lu F."/>
            <person name="Nusskern D.R."/>
            <person name="Shue B.C."/>
            <person name="Zheng X.H."/>
            <person name="Zhong F."/>
            <person name="Delcher A.L."/>
            <person name="Huson D.H."/>
            <person name="Kravitz S.A."/>
            <person name="Mouchard L."/>
            <person name="Reinert K."/>
            <person name="Remington K.A."/>
            <person name="Clark A.G."/>
            <person name="Waterman M.S."/>
            <person name="Eichler E.E."/>
            <person name="Adams M.D."/>
            <person name="Hunkapiller M.W."/>
            <person name="Myers E.W."/>
            <person name="Venter J.C."/>
        </authorList>
    </citation>
    <scope>NUCLEOTIDE SEQUENCE [LARGE SCALE GENOMIC DNA]</scope>
</reference>
<reference key="4">
    <citation type="journal article" date="2014" name="Mol. Med. Report.">
        <title>Interaction between p12CDK2AP1 and a novel unnamed protein product inhibits cell proliferation by regulating the cell cycle.</title>
        <authorList>
            <person name="Liu L."/>
            <person name="Yang X."/>
            <person name="Ni Q."/>
            <person name="Xiao Z."/>
            <person name="Zhao Y."/>
            <person name="Han J."/>
            <person name="Sun M."/>
            <person name="Chen B."/>
        </authorList>
    </citation>
    <scope>FUNCTION</scope>
    <scope>INTERACTION WITH CDK2AP1</scope>
</reference>
<sequence length="119" mass="13369">MRPVDADEAREPREEPGSPLSPAPRAGRENLASLERERARAHWRARRKLLEIQSLLDAIKSEVEAEERGARAPAPRPRAEAEERVARLCAEAERKAAEAARMGRRIVELHQRIAGCECC</sequence>